<name>BETI_YERP3</name>
<accession>A7FKL4</accession>
<feature type="chain" id="PRO_1000083571" description="HTH-type transcriptional regulator BetI">
    <location>
        <begin position="1"/>
        <end position="198"/>
    </location>
</feature>
<feature type="domain" description="HTH tetR-type" evidence="2">
    <location>
        <begin position="8"/>
        <end position="68"/>
    </location>
</feature>
<feature type="DNA-binding region" description="H-T-H motif" evidence="2">
    <location>
        <begin position="31"/>
        <end position="50"/>
    </location>
</feature>
<keyword id="KW-0238">DNA-binding</keyword>
<keyword id="KW-0678">Repressor</keyword>
<keyword id="KW-0804">Transcription</keyword>
<keyword id="KW-0805">Transcription regulation</keyword>
<dbReference type="EMBL" id="CP000720">
    <property type="protein sequence ID" value="ABS48985.1"/>
    <property type="molecule type" value="Genomic_DNA"/>
</dbReference>
<dbReference type="RefSeq" id="WP_002218278.1">
    <property type="nucleotide sequence ID" value="NC_009708.1"/>
</dbReference>
<dbReference type="SMR" id="A7FKL4"/>
<dbReference type="GeneID" id="57977306"/>
<dbReference type="KEGG" id="ypi:YpsIP31758_2829"/>
<dbReference type="HOGENOM" id="CLU_069356_15_4_6"/>
<dbReference type="UniPathway" id="UPA00529"/>
<dbReference type="Proteomes" id="UP000002412">
    <property type="component" value="Chromosome"/>
</dbReference>
<dbReference type="GO" id="GO:0003700">
    <property type="term" value="F:DNA-binding transcription factor activity"/>
    <property type="evidence" value="ECO:0007669"/>
    <property type="project" value="UniProtKB-UniRule"/>
</dbReference>
<dbReference type="GO" id="GO:0000976">
    <property type="term" value="F:transcription cis-regulatory region binding"/>
    <property type="evidence" value="ECO:0007669"/>
    <property type="project" value="TreeGrafter"/>
</dbReference>
<dbReference type="GO" id="GO:0019285">
    <property type="term" value="P:glycine betaine biosynthetic process from choline"/>
    <property type="evidence" value="ECO:0007669"/>
    <property type="project" value="UniProtKB-UniRule"/>
</dbReference>
<dbReference type="GO" id="GO:0045892">
    <property type="term" value="P:negative regulation of DNA-templated transcription"/>
    <property type="evidence" value="ECO:0007669"/>
    <property type="project" value="UniProtKB-UniRule"/>
</dbReference>
<dbReference type="Gene3D" id="1.10.357.10">
    <property type="entry name" value="Tetracycline Repressor, domain 2"/>
    <property type="match status" value="1"/>
</dbReference>
<dbReference type="HAMAP" id="MF_00768">
    <property type="entry name" value="HTH_type_BetI"/>
    <property type="match status" value="1"/>
</dbReference>
<dbReference type="InterPro" id="IPR039538">
    <property type="entry name" value="BetI_C"/>
</dbReference>
<dbReference type="InterPro" id="IPR023772">
    <property type="entry name" value="DNA-bd_HTH_TetR-type_CS"/>
</dbReference>
<dbReference type="InterPro" id="IPR009057">
    <property type="entry name" value="Homeodomain-like_sf"/>
</dbReference>
<dbReference type="InterPro" id="IPR050109">
    <property type="entry name" value="HTH-type_TetR-like_transc_reg"/>
</dbReference>
<dbReference type="InterPro" id="IPR001647">
    <property type="entry name" value="HTH_TetR"/>
</dbReference>
<dbReference type="InterPro" id="IPR036271">
    <property type="entry name" value="Tet_transcr_reg_TetR-rel_C_sf"/>
</dbReference>
<dbReference type="InterPro" id="IPR017757">
    <property type="entry name" value="Tscrpt_rep_BetI"/>
</dbReference>
<dbReference type="NCBIfam" id="TIGR03384">
    <property type="entry name" value="betaine_BetI"/>
    <property type="match status" value="1"/>
</dbReference>
<dbReference type="NCBIfam" id="NF001978">
    <property type="entry name" value="PRK00767.1"/>
    <property type="match status" value="1"/>
</dbReference>
<dbReference type="PANTHER" id="PTHR30055:SF234">
    <property type="entry name" value="HTH-TYPE TRANSCRIPTIONAL REGULATOR BETI"/>
    <property type="match status" value="1"/>
</dbReference>
<dbReference type="PANTHER" id="PTHR30055">
    <property type="entry name" value="HTH-TYPE TRANSCRIPTIONAL REGULATOR RUTR"/>
    <property type="match status" value="1"/>
</dbReference>
<dbReference type="Pfam" id="PF13977">
    <property type="entry name" value="TetR_C_6"/>
    <property type="match status" value="1"/>
</dbReference>
<dbReference type="Pfam" id="PF00440">
    <property type="entry name" value="TetR_N"/>
    <property type="match status" value="1"/>
</dbReference>
<dbReference type="PRINTS" id="PR00455">
    <property type="entry name" value="HTHTETR"/>
</dbReference>
<dbReference type="SUPFAM" id="SSF46689">
    <property type="entry name" value="Homeodomain-like"/>
    <property type="match status" value="1"/>
</dbReference>
<dbReference type="SUPFAM" id="SSF48498">
    <property type="entry name" value="Tetracyclin repressor-like, C-terminal domain"/>
    <property type="match status" value="1"/>
</dbReference>
<dbReference type="PROSITE" id="PS01081">
    <property type="entry name" value="HTH_TETR_1"/>
    <property type="match status" value="1"/>
</dbReference>
<dbReference type="PROSITE" id="PS50977">
    <property type="entry name" value="HTH_TETR_2"/>
    <property type="match status" value="1"/>
</dbReference>
<sequence>MPKVGMQPIRRQQLIEATMAAVNEVGMHEASIAQIAKRAGVSNGIISHYFRDKNGLLEATMRYLIRHLGEAVKQHLAALSVNDPRARLRAIAEGNFDDSQINSAAMKTWLAFWASSMHSPQLYRLQQVNNRRLYSNLCAEFKRCLPREQAQLAAKGMAGLIDGLWLRSALSGEHFNRQEALLIIHNYIEQQLNIKYKC</sequence>
<organism>
    <name type="scientific">Yersinia pseudotuberculosis serotype O:1b (strain IP 31758)</name>
    <dbReference type="NCBI Taxonomy" id="349747"/>
    <lineage>
        <taxon>Bacteria</taxon>
        <taxon>Pseudomonadati</taxon>
        <taxon>Pseudomonadota</taxon>
        <taxon>Gammaproteobacteria</taxon>
        <taxon>Enterobacterales</taxon>
        <taxon>Yersiniaceae</taxon>
        <taxon>Yersinia</taxon>
    </lineage>
</organism>
<proteinExistence type="inferred from homology"/>
<comment type="function">
    <text evidence="1">Repressor involved in the biosynthesis of the osmoprotectant glycine betaine. It represses transcription of the choline transporter BetT and the genes of BetAB involved in the synthesis of glycine betaine (By similarity).</text>
</comment>
<comment type="pathway">
    <text>Amine and polyamine biosynthesis; betaine biosynthesis via choline pathway [regulation].</text>
</comment>
<protein>
    <recommendedName>
        <fullName evidence="2">HTH-type transcriptional regulator BetI</fullName>
    </recommendedName>
</protein>
<reference key="1">
    <citation type="journal article" date="2007" name="PLoS Genet.">
        <title>The complete genome sequence of Yersinia pseudotuberculosis IP31758, the causative agent of Far East scarlet-like fever.</title>
        <authorList>
            <person name="Eppinger M."/>
            <person name="Rosovitz M.J."/>
            <person name="Fricke W.F."/>
            <person name="Rasko D.A."/>
            <person name="Kokorina G."/>
            <person name="Fayolle C."/>
            <person name="Lindler L.E."/>
            <person name="Carniel E."/>
            <person name="Ravel J."/>
        </authorList>
    </citation>
    <scope>NUCLEOTIDE SEQUENCE [LARGE SCALE GENOMIC DNA]</scope>
    <source>
        <strain>IP 31758</strain>
    </source>
</reference>
<gene>
    <name evidence="2" type="primary">betI</name>
    <name type="ordered locus">YpsIP31758_2829</name>
</gene>
<evidence type="ECO:0000250" key="1"/>
<evidence type="ECO:0000255" key="2">
    <source>
        <dbReference type="HAMAP-Rule" id="MF_00768"/>
    </source>
</evidence>